<proteinExistence type="inferred from homology"/>
<name>RS6_PSYA2</name>
<feature type="chain" id="PRO_0000229569" description="Small ribosomal subunit protein bS6">
    <location>
        <begin position="1"/>
        <end position="132"/>
    </location>
</feature>
<feature type="region of interest" description="Disordered" evidence="2">
    <location>
        <begin position="94"/>
        <end position="132"/>
    </location>
</feature>
<feature type="compositionally biased region" description="Acidic residues" evidence="2">
    <location>
        <begin position="122"/>
        <end position="132"/>
    </location>
</feature>
<dbReference type="EMBL" id="CP000082">
    <property type="protein sequence ID" value="AAZ19187.1"/>
    <property type="molecule type" value="Genomic_DNA"/>
</dbReference>
<dbReference type="RefSeq" id="WP_011280609.1">
    <property type="nucleotide sequence ID" value="NC_007204.1"/>
</dbReference>
<dbReference type="SMR" id="Q4FS21"/>
<dbReference type="STRING" id="259536.Psyc_1337"/>
<dbReference type="KEGG" id="par:Psyc_1337"/>
<dbReference type="eggNOG" id="COG0360">
    <property type="taxonomic scope" value="Bacteria"/>
</dbReference>
<dbReference type="HOGENOM" id="CLU_113441_6_1_6"/>
<dbReference type="OrthoDB" id="9812702at2"/>
<dbReference type="Proteomes" id="UP000000546">
    <property type="component" value="Chromosome"/>
</dbReference>
<dbReference type="GO" id="GO:0022627">
    <property type="term" value="C:cytosolic small ribosomal subunit"/>
    <property type="evidence" value="ECO:0007669"/>
    <property type="project" value="TreeGrafter"/>
</dbReference>
<dbReference type="GO" id="GO:0070181">
    <property type="term" value="F:small ribosomal subunit rRNA binding"/>
    <property type="evidence" value="ECO:0007669"/>
    <property type="project" value="TreeGrafter"/>
</dbReference>
<dbReference type="GO" id="GO:0003735">
    <property type="term" value="F:structural constituent of ribosome"/>
    <property type="evidence" value="ECO:0007669"/>
    <property type="project" value="InterPro"/>
</dbReference>
<dbReference type="GO" id="GO:0006412">
    <property type="term" value="P:translation"/>
    <property type="evidence" value="ECO:0007669"/>
    <property type="project" value="UniProtKB-UniRule"/>
</dbReference>
<dbReference type="CDD" id="cd00473">
    <property type="entry name" value="bS6"/>
    <property type="match status" value="1"/>
</dbReference>
<dbReference type="Gene3D" id="3.30.70.60">
    <property type="match status" value="1"/>
</dbReference>
<dbReference type="HAMAP" id="MF_00360">
    <property type="entry name" value="Ribosomal_bS6"/>
    <property type="match status" value="1"/>
</dbReference>
<dbReference type="InterPro" id="IPR000529">
    <property type="entry name" value="Ribosomal_bS6"/>
</dbReference>
<dbReference type="InterPro" id="IPR020815">
    <property type="entry name" value="Ribosomal_bS6_CS"/>
</dbReference>
<dbReference type="InterPro" id="IPR035980">
    <property type="entry name" value="Ribosomal_bS6_sf"/>
</dbReference>
<dbReference type="InterPro" id="IPR020814">
    <property type="entry name" value="Ribosomal_S6_plastid/chlpt"/>
</dbReference>
<dbReference type="InterPro" id="IPR014717">
    <property type="entry name" value="Transl_elong_EF1B/ribsomal_bS6"/>
</dbReference>
<dbReference type="NCBIfam" id="TIGR00166">
    <property type="entry name" value="S6"/>
    <property type="match status" value="1"/>
</dbReference>
<dbReference type="PANTHER" id="PTHR21011">
    <property type="entry name" value="MITOCHONDRIAL 28S RIBOSOMAL PROTEIN S6"/>
    <property type="match status" value="1"/>
</dbReference>
<dbReference type="PANTHER" id="PTHR21011:SF1">
    <property type="entry name" value="SMALL RIBOSOMAL SUBUNIT PROTEIN BS6M"/>
    <property type="match status" value="1"/>
</dbReference>
<dbReference type="Pfam" id="PF01250">
    <property type="entry name" value="Ribosomal_S6"/>
    <property type="match status" value="1"/>
</dbReference>
<dbReference type="SUPFAM" id="SSF54995">
    <property type="entry name" value="Ribosomal protein S6"/>
    <property type="match status" value="1"/>
</dbReference>
<dbReference type="PROSITE" id="PS01048">
    <property type="entry name" value="RIBOSOMAL_S6"/>
    <property type="match status" value="1"/>
</dbReference>
<protein>
    <recommendedName>
        <fullName evidence="1">Small ribosomal subunit protein bS6</fullName>
    </recommendedName>
    <alternativeName>
        <fullName evidence="3">30S ribosomal protein S6</fullName>
    </alternativeName>
</protein>
<comment type="function">
    <text evidence="1">Binds together with bS18 to 16S ribosomal RNA.</text>
</comment>
<comment type="similarity">
    <text evidence="1">Belongs to the bacterial ribosomal protein bS6 family.</text>
</comment>
<sequence>MRHYELVLLVHPDQSDQVVGMVERYIKLVQDNNGTIHRLEDWGRRQLAYPINKIHKAHYVLFNIETDGETLAELEELFRYNDAIIRSLVMRRDDAVTEESQLAKNADEKRARKATTRRPDRDDSDDNDHSED</sequence>
<keyword id="KW-1185">Reference proteome</keyword>
<keyword id="KW-0687">Ribonucleoprotein</keyword>
<keyword id="KW-0689">Ribosomal protein</keyword>
<keyword id="KW-0694">RNA-binding</keyword>
<keyword id="KW-0699">rRNA-binding</keyword>
<gene>
    <name evidence="1" type="primary">rpsF</name>
    <name type="ordered locus">Psyc_1337</name>
</gene>
<accession>Q4FS21</accession>
<reference key="1">
    <citation type="journal article" date="2010" name="Appl. Environ. Microbiol.">
        <title>The genome sequence of Psychrobacter arcticus 273-4, a psychroactive Siberian permafrost bacterium, reveals mechanisms for adaptation to low-temperature growth.</title>
        <authorList>
            <person name="Ayala-del-Rio H.L."/>
            <person name="Chain P.S."/>
            <person name="Grzymski J.J."/>
            <person name="Ponder M.A."/>
            <person name="Ivanova N."/>
            <person name="Bergholz P.W."/>
            <person name="Di Bartolo G."/>
            <person name="Hauser L."/>
            <person name="Land M."/>
            <person name="Bakermans C."/>
            <person name="Rodrigues D."/>
            <person name="Klappenbach J."/>
            <person name="Zarka D."/>
            <person name="Larimer F."/>
            <person name="Richardson P."/>
            <person name="Murray A."/>
            <person name="Thomashow M."/>
            <person name="Tiedje J.M."/>
        </authorList>
    </citation>
    <scope>NUCLEOTIDE SEQUENCE [LARGE SCALE GENOMIC DNA]</scope>
    <source>
        <strain>DSM 17307 / VKM B-2377 / 273-4</strain>
    </source>
</reference>
<organism>
    <name type="scientific">Psychrobacter arcticus (strain DSM 17307 / VKM B-2377 / 273-4)</name>
    <dbReference type="NCBI Taxonomy" id="259536"/>
    <lineage>
        <taxon>Bacteria</taxon>
        <taxon>Pseudomonadati</taxon>
        <taxon>Pseudomonadota</taxon>
        <taxon>Gammaproteobacteria</taxon>
        <taxon>Moraxellales</taxon>
        <taxon>Moraxellaceae</taxon>
        <taxon>Psychrobacter</taxon>
    </lineage>
</organism>
<evidence type="ECO:0000255" key="1">
    <source>
        <dbReference type="HAMAP-Rule" id="MF_00360"/>
    </source>
</evidence>
<evidence type="ECO:0000256" key="2">
    <source>
        <dbReference type="SAM" id="MobiDB-lite"/>
    </source>
</evidence>
<evidence type="ECO:0000305" key="3"/>